<evidence type="ECO:0000255" key="1">
    <source>
        <dbReference type="HAMAP-Rule" id="MF_00272"/>
    </source>
</evidence>
<evidence type="ECO:0000255" key="2">
    <source>
        <dbReference type="PROSITE-ProRule" id="PRU01066"/>
    </source>
</evidence>
<comment type="function">
    <text evidence="1">The glycine cleavage system catalyzes the degradation of glycine. The H protein shuttles the methylamine group of glycine from the P protein to the T protein.</text>
</comment>
<comment type="cofactor">
    <cofactor evidence="1">
        <name>(R)-lipoate</name>
        <dbReference type="ChEBI" id="CHEBI:83088"/>
    </cofactor>
    <text evidence="1">Binds 1 lipoyl cofactor covalently.</text>
</comment>
<comment type="subunit">
    <text evidence="1">The glycine cleavage system is composed of four proteins: P, T, L and H.</text>
</comment>
<comment type="similarity">
    <text evidence="1">Belongs to the GcvH family.</text>
</comment>
<protein>
    <recommendedName>
        <fullName evidence="1">Glycine cleavage system H protein</fullName>
    </recommendedName>
</protein>
<feature type="chain" id="PRO_1000059175" description="Glycine cleavage system H protein">
    <location>
        <begin position="1"/>
        <end position="128"/>
    </location>
</feature>
<feature type="domain" description="Lipoyl-binding" evidence="2">
    <location>
        <begin position="23"/>
        <end position="105"/>
    </location>
</feature>
<feature type="modified residue" description="N6-lipoyllysine" evidence="1">
    <location>
        <position position="64"/>
    </location>
</feature>
<accession>Q0VLA7</accession>
<name>GCSH_ALCBS</name>
<dbReference type="EMBL" id="AM286690">
    <property type="protein sequence ID" value="CAL18041.1"/>
    <property type="molecule type" value="Genomic_DNA"/>
</dbReference>
<dbReference type="RefSeq" id="WP_011589864.1">
    <property type="nucleotide sequence ID" value="NC_008260.1"/>
</dbReference>
<dbReference type="SMR" id="Q0VLA7"/>
<dbReference type="STRING" id="393595.ABO_2593"/>
<dbReference type="KEGG" id="abo:ABO_2593"/>
<dbReference type="eggNOG" id="COG0509">
    <property type="taxonomic scope" value="Bacteria"/>
</dbReference>
<dbReference type="HOGENOM" id="CLU_097408_2_0_6"/>
<dbReference type="OrthoDB" id="9796712at2"/>
<dbReference type="Proteomes" id="UP000008871">
    <property type="component" value="Chromosome"/>
</dbReference>
<dbReference type="GO" id="GO:0005829">
    <property type="term" value="C:cytosol"/>
    <property type="evidence" value="ECO:0007669"/>
    <property type="project" value="TreeGrafter"/>
</dbReference>
<dbReference type="GO" id="GO:0005960">
    <property type="term" value="C:glycine cleavage complex"/>
    <property type="evidence" value="ECO:0007669"/>
    <property type="project" value="InterPro"/>
</dbReference>
<dbReference type="GO" id="GO:0019464">
    <property type="term" value="P:glycine decarboxylation via glycine cleavage system"/>
    <property type="evidence" value="ECO:0007669"/>
    <property type="project" value="UniProtKB-UniRule"/>
</dbReference>
<dbReference type="CDD" id="cd06848">
    <property type="entry name" value="GCS_H"/>
    <property type="match status" value="1"/>
</dbReference>
<dbReference type="Gene3D" id="2.40.50.100">
    <property type="match status" value="1"/>
</dbReference>
<dbReference type="HAMAP" id="MF_00272">
    <property type="entry name" value="GcvH"/>
    <property type="match status" value="1"/>
</dbReference>
<dbReference type="InterPro" id="IPR000089">
    <property type="entry name" value="Biotin_lipoyl"/>
</dbReference>
<dbReference type="InterPro" id="IPR002930">
    <property type="entry name" value="GCV_H"/>
</dbReference>
<dbReference type="InterPro" id="IPR033753">
    <property type="entry name" value="GCV_H/Fam206"/>
</dbReference>
<dbReference type="InterPro" id="IPR017453">
    <property type="entry name" value="GCV_H_sub"/>
</dbReference>
<dbReference type="InterPro" id="IPR011053">
    <property type="entry name" value="Single_hybrid_motif"/>
</dbReference>
<dbReference type="NCBIfam" id="TIGR00527">
    <property type="entry name" value="gcvH"/>
    <property type="match status" value="1"/>
</dbReference>
<dbReference type="NCBIfam" id="NF002270">
    <property type="entry name" value="PRK01202.1"/>
    <property type="match status" value="1"/>
</dbReference>
<dbReference type="PANTHER" id="PTHR11715">
    <property type="entry name" value="GLYCINE CLEAVAGE SYSTEM H PROTEIN"/>
    <property type="match status" value="1"/>
</dbReference>
<dbReference type="PANTHER" id="PTHR11715:SF3">
    <property type="entry name" value="GLYCINE CLEAVAGE SYSTEM H PROTEIN-RELATED"/>
    <property type="match status" value="1"/>
</dbReference>
<dbReference type="Pfam" id="PF01597">
    <property type="entry name" value="GCV_H"/>
    <property type="match status" value="1"/>
</dbReference>
<dbReference type="SUPFAM" id="SSF51230">
    <property type="entry name" value="Single hybrid motif"/>
    <property type="match status" value="1"/>
</dbReference>
<dbReference type="PROSITE" id="PS50968">
    <property type="entry name" value="BIOTINYL_LIPOYL"/>
    <property type="match status" value="1"/>
</dbReference>
<sequence>MSEIPAELRYASSHEWAKVEDGVATVGISDHAQDAMGDLVYVELPEVGQVVAAGDETGVVESVKAASDIYSPVSGEIVEINEALEDEPELVNNVPYEGGWLFKVQLTDEGELDSLLTADQYQAQIDSE</sequence>
<reference key="1">
    <citation type="journal article" date="2006" name="Nat. Biotechnol.">
        <title>Genome sequence of the ubiquitous hydrocarbon-degrading marine bacterium Alcanivorax borkumensis.</title>
        <authorList>
            <person name="Schneiker S."/>
            <person name="Martins dos Santos V.A.P."/>
            <person name="Bartels D."/>
            <person name="Bekel T."/>
            <person name="Brecht M."/>
            <person name="Buhrmester J."/>
            <person name="Chernikova T.N."/>
            <person name="Denaro R."/>
            <person name="Ferrer M."/>
            <person name="Gertler C."/>
            <person name="Goesmann A."/>
            <person name="Golyshina O.V."/>
            <person name="Kaminski F."/>
            <person name="Khachane A.N."/>
            <person name="Lang S."/>
            <person name="Linke B."/>
            <person name="McHardy A.C."/>
            <person name="Meyer F."/>
            <person name="Nechitaylo T."/>
            <person name="Puehler A."/>
            <person name="Regenhardt D."/>
            <person name="Rupp O."/>
            <person name="Sabirova J.S."/>
            <person name="Selbitschka W."/>
            <person name="Yakimov M.M."/>
            <person name="Timmis K.N."/>
            <person name="Vorhoelter F.-J."/>
            <person name="Weidner S."/>
            <person name="Kaiser O."/>
            <person name="Golyshin P.N."/>
        </authorList>
    </citation>
    <scope>NUCLEOTIDE SEQUENCE [LARGE SCALE GENOMIC DNA]</scope>
    <source>
        <strain>ATCC 700651 / DSM 11573 / NCIMB 13689 / SK2</strain>
    </source>
</reference>
<organism>
    <name type="scientific">Alcanivorax borkumensis (strain ATCC 700651 / DSM 11573 / NCIMB 13689 / SK2)</name>
    <dbReference type="NCBI Taxonomy" id="393595"/>
    <lineage>
        <taxon>Bacteria</taxon>
        <taxon>Pseudomonadati</taxon>
        <taxon>Pseudomonadota</taxon>
        <taxon>Gammaproteobacteria</taxon>
        <taxon>Oceanospirillales</taxon>
        <taxon>Alcanivoracaceae</taxon>
        <taxon>Alcanivorax</taxon>
    </lineage>
</organism>
<proteinExistence type="inferred from homology"/>
<gene>
    <name evidence="1" type="primary">gcvH</name>
    <name type="ordered locus">ABO_2593</name>
</gene>
<keyword id="KW-0450">Lipoyl</keyword>
<keyword id="KW-1185">Reference proteome</keyword>